<reference key="1">
    <citation type="journal article" date="2004" name="Proc. Natl. Acad. Sci. U.S.A.">
        <title>Complete genomes of two clinical Staphylococcus aureus strains: evidence for the rapid evolution of virulence and drug resistance.</title>
        <authorList>
            <person name="Holden M.T.G."/>
            <person name="Feil E.J."/>
            <person name="Lindsay J.A."/>
            <person name="Peacock S.J."/>
            <person name="Day N.P.J."/>
            <person name="Enright M.C."/>
            <person name="Foster T.J."/>
            <person name="Moore C.E."/>
            <person name="Hurst L."/>
            <person name="Atkin R."/>
            <person name="Barron A."/>
            <person name="Bason N."/>
            <person name="Bentley S.D."/>
            <person name="Chillingworth C."/>
            <person name="Chillingworth T."/>
            <person name="Churcher C."/>
            <person name="Clark L."/>
            <person name="Corton C."/>
            <person name="Cronin A."/>
            <person name="Doggett J."/>
            <person name="Dowd L."/>
            <person name="Feltwell T."/>
            <person name="Hance Z."/>
            <person name="Harris B."/>
            <person name="Hauser H."/>
            <person name="Holroyd S."/>
            <person name="Jagels K."/>
            <person name="James K.D."/>
            <person name="Lennard N."/>
            <person name="Line A."/>
            <person name="Mayes R."/>
            <person name="Moule S."/>
            <person name="Mungall K."/>
            <person name="Ormond D."/>
            <person name="Quail M.A."/>
            <person name="Rabbinowitsch E."/>
            <person name="Rutherford K.M."/>
            <person name="Sanders M."/>
            <person name="Sharp S."/>
            <person name="Simmonds M."/>
            <person name="Stevens K."/>
            <person name="Whitehead S."/>
            <person name="Barrell B.G."/>
            <person name="Spratt B.G."/>
            <person name="Parkhill J."/>
        </authorList>
    </citation>
    <scope>NUCLEOTIDE SEQUENCE [LARGE SCALE GENOMIC DNA]</scope>
    <source>
        <strain>MSSA476</strain>
    </source>
</reference>
<dbReference type="EC" id="3.5.1.28"/>
<dbReference type="EC" id="3.2.1.96"/>
<dbReference type="EMBL" id="BX571857">
    <property type="protein sequence ID" value="CAG42763.1"/>
    <property type="molecule type" value="Genomic_DNA"/>
</dbReference>
<dbReference type="RefSeq" id="WP_001074541.1">
    <property type="nucleotide sequence ID" value="NC_002953.3"/>
</dbReference>
<dbReference type="SMR" id="Q6GAG0"/>
<dbReference type="CAZy" id="GH73">
    <property type="family name" value="Glycoside Hydrolase Family 73"/>
</dbReference>
<dbReference type="KEGG" id="sas:SAS0988"/>
<dbReference type="HOGENOM" id="CLU_005906_0_0_9"/>
<dbReference type="GO" id="GO:0005576">
    <property type="term" value="C:extracellular region"/>
    <property type="evidence" value="ECO:0007669"/>
    <property type="project" value="UniProtKB-SubCell"/>
</dbReference>
<dbReference type="GO" id="GO:0004040">
    <property type="term" value="F:amidase activity"/>
    <property type="evidence" value="ECO:0007669"/>
    <property type="project" value="InterPro"/>
</dbReference>
<dbReference type="GO" id="GO:0033925">
    <property type="term" value="F:mannosyl-glycoprotein endo-beta-N-acetylglucosaminidase activity"/>
    <property type="evidence" value="ECO:0007669"/>
    <property type="project" value="UniProtKB-EC"/>
</dbReference>
<dbReference type="GO" id="GO:0008745">
    <property type="term" value="F:N-acetylmuramoyl-L-alanine amidase activity"/>
    <property type="evidence" value="ECO:0007669"/>
    <property type="project" value="UniProtKB-EC"/>
</dbReference>
<dbReference type="GO" id="GO:0071555">
    <property type="term" value="P:cell wall organization"/>
    <property type="evidence" value="ECO:0007669"/>
    <property type="project" value="UniProtKB-KW"/>
</dbReference>
<dbReference type="GO" id="GO:0009253">
    <property type="term" value="P:peptidoglycan catabolic process"/>
    <property type="evidence" value="ECO:0007669"/>
    <property type="project" value="InterPro"/>
</dbReference>
<dbReference type="CDD" id="cd06583">
    <property type="entry name" value="PGRP"/>
    <property type="match status" value="1"/>
</dbReference>
<dbReference type="Gene3D" id="1.10.530.10">
    <property type="match status" value="1"/>
</dbReference>
<dbReference type="Gene3D" id="2.30.30.170">
    <property type="match status" value="7"/>
</dbReference>
<dbReference type="Gene3D" id="3.40.80.10">
    <property type="entry name" value="Peptidoglycan recognition protein-like"/>
    <property type="match status" value="1"/>
</dbReference>
<dbReference type="InterPro" id="IPR036505">
    <property type="entry name" value="Amidase/PGRP_sf"/>
</dbReference>
<dbReference type="InterPro" id="IPR002502">
    <property type="entry name" value="Amidase_domain"/>
</dbReference>
<dbReference type="InterPro" id="IPR025987">
    <property type="entry name" value="GW_dom"/>
</dbReference>
<dbReference type="InterPro" id="IPR038200">
    <property type="entry name" value="GW_dom_sf"/>
</dbReference>
<dbReference type="InterPro" id="IPR002901">
    <property type="entry name" value="MGlyc_endo_b_GlcNAc-like_dom"/>
</dbReference>
<dbReference type="Pfam" id="PF01510">
    <property type="entry name" value="Amidase_2"/>
    <property type="match status" value="1"/>
</dbReference>
<dbReference type="Pfam" id="PF01832">
    <property type="entry name" value="Glucosaminidase"/>
    <property type="match status" value="1"/>
</dbReference>
<dbReference type="Pfam" id="PF13457">
    <property type="entry name" value="GW"/>
    <property type="match status" value="6"/>
</dbReference>
<dbReference type="SMART" id="SM00644">
    <property type="entry name" value="Ami_2"/>
    <property type="match status" value="1"/>
</dbReference>
<dbReference type="SMART" id="SM00047">
    <property type="entry name" value="LYZ2"/>
    <property type="match status" value="1"/>
</dbReference>
<dbReference type="SUPFAM" id="SSF55846">
    <property type="entry name" value="N-acetylmuramoyl-L-alanine amidase-like"/>
    <property type="match status" value="1"/>
</dbReference>
<dbReference type="SUPFAM" id="SSF82057">
    <property type="entry name" value="Prokaryotic SH3-related domain"/>
    <property type="match status" value="1"/>
</dbReference>
<dbReference type="PROSITE" id="PS51780">
    <property type="entry name" value="GW"/>
    <property type="match status" value="7"/>
</dbReference>
<keyword id="KW-0961">Cell wall biogenesis/degradation</keyword>
<keyword id="KW-0378">Hydrolase</keyword>
<keyword id="KW-0511">Multifunctional enzyme</keyword>
<keyword id="KW-0677">Repeat</keyword>
<keyword id="KW-0964">Secreted</keyword>
<keyword id="KW-0732">Signal</keyword>
<name>ATL_STAAS</name>
<sequence>MAKKFNYKLPSMVALTLVGSAVTAHQVQAAETTQDQTTNKNVLDSNKVKATTEQAKAEVKNPTQNISGTQVYQDPAIVQPKTANNKTGNAQVSQKVDTAQVNGDTRANQSATTNNTQPVAKSTSTTAPKTNTNVTNAGYSLVDDEDDNSENQINPELIKSAAKPAALETQYKAAAPKAATTSAPKAKTEATPKVTTFSASAQPRSVAATPKTSLPKYKPQVNSSINDYIRKNNLKAPKIEEDYTSYFPKYAYRNGVGRPEGIVVHDTANDRSTINGEISYMKNNYQNAFVHAFVDGDRIIETAPTDYLSWGVGAVGNPRFINVEIVHTHDYASFARSMNNYADYAATQLQYYGLKPDSAEYDGNGTVWTHYAVSKYLGGTDHADPHGYLRSHNYSYDQLYDLINEKYLIKMGKVAPWGTQSTTTPTTPSKPSTGKLTVAANNGVAQIKPTNSGLYTTVYDKTGKATNEVQKTFAVSKTATLGNQKFYLVQDYNSGNKFGWVKEGDVVYNTAKSPVNVNQSYSIKPGTKLYTVPWGTSKQVAGSVSGSGNQTFKASKQQQIDKSIYLYGSVNGKSGWVSKAYLVDTAKPTPTPTPKPSTPTTNNKLTVSSLNGVAQINAKNNGLFTTVYDKTGKPTKEVQKTFAVTKEASLGGNKFYLVKDYNSPTLIGWVKQGDVIYNNAKSPVNVMQTYTVKPGTKLYSVPWGTYKQEAGAVSGTGNQTFKATKQQQIDKSIYLFGTVNGKSGWVSKAYLAVPAAPKKAVAQPKTAVKAYTVTKPQTTQTVSKIAQVKPNNTGIRASVYEKTAKNGAKYADRTFYVTKERAHGNETYVLLNNTSHNIPLGWFNVKDLNVQNLGKEVKTTQKYTVNKSNNGLSMVPWGTKNQVILTGNNIAQGTFNATKQVSVGKDVYLYGTINNRTGWVNAKDLTAPTAVKPTTSAAKDYNYTYVIKNGNGYYYVTPNSDTAKYSLKAFNEQPFAVVKEQVINEQTWYYGKLSNGKLAWIKSTDLAKELIKYNQTGMTLNQVAQIQAGLQYKPQVQRVPGKWTDANFNDVKHAMDTKRLAQDPALKYQFLRLDQPQNISIDKINQFLKGKGVLENQGAAFNKAAQMYGINEVYLISHALLETGNGTSQLAKGADVVNNKVVTNSNTKYHNVFGIAAYDNDPLREGIKYAKQAGWDTVSKAIVGGAKFIGNSYVKAGQNTLYKMRWNPAHPGTHQYATDIDWANINAKIIKGYYDKIGEVGKYFDIPQYK</sequence>
<accession>Q6GAG0</accession>
<comment type="function">
    <text evidence="1">Endohydrolysis of the di-N-acetylchitobiosyl unit in high-mannose glycopeptides and glycoproteins containing the -[(Man)5(GlcNAc)2]-Asn structure. One N-acetyl-D-glucosamine residue remains attached to the protein; the rest of the oligosaccharide is released intact. Cleaves the peptidoglycan connecting the daughter cells at the end of the cell division cycle, resulting in the separation of the two newly divided cells. Acts as an autolysin in penicillin-induced lysis (By similarity).</text>
</comment>
<comment type="catalytic activity">
    <reaction>
        <text>Hydrolyzes the link between N-acetylmuramoyl residues and L-amino acid residues in certain cell-wall glycopeptides.</text>
        <dbReference type="EC" id="3.5.1.28"/>
    </reaction>
</comment>
<comment type="catalytic activity">
    <reaction>
        <text>an N(4)-(oligosaccharide-(1-&gt;3)-[oligosaccharide-(1-&gt;6)]-beta-D-Man-(1-&gt;4)-beta-D-GlcNAc-(1-&gt;4)-alpha-D-GlcNAc)-L-asparaginyl-[protein] + H2O = an oligosaccharide-(1-&gt;3)-[oligosaccharide-(1-&gt;6)]-beta-D-Man-(1-&gt;4)-D-GlcNAc + N(4)-(N-acetyl-beta-D-glucosaminyl)-L-asparaginyl-[protein]</text>
        <dbReference type="Rhea" id="RHEA:73067"/>
        <dbReference type="Rhea" id="RHEA-COMP:12603"/>
        <dbReference type="Rhea" id="RHEA-COMP:18176"/>
        <dbReference type="ChEBI" id="CHEBI:15377"/>
        <dbReference type="ChEBI" id="CHEBI:132248"/>
        <dbReference type="ChEBI" id="CHEBI:192714"/>
        <dbReference type="ChEBI" id="CHEBI:192715"/>
        <dbReference type="EC" id="3.2.1.96"/>
    </reaction>
</comment>
<comment type="subunit">
    <text evidence="1">Oligomer; forms a ring structure at the cell surface which is important for efficient partitioning of daughter cells after cell division.</text>
</comment>
<comment type="subcellular location">
    <subcellularLocation>
        <location evidence="1">Secreted</location>
    </subcellularLocation>
    <text evidence="1">Secreted, and then anchored on the cell surface at the peripheral cell wall above the completed septum (septal region), for the next cell division cycle.</text>
</comment>
<comment type="domain">
    <text evidence="1">The GW domains are responsible for directing the proteins to the septal region.</text>
</comment>
<comment type="PTM">
    <text evidence="1">Undergoes proteolytic processing to generate the two extracellular lytic enzymes, probably at the septal region on the cell surface.</text>
</comment>
<comment type="similarity">
    <text evidence="5">In the N-terminal section; belongs to the N-acetylmuramoyl-L-alanine amidase 2 family.</text>
</comment>
<comment type="similarity">
    <text evidence="5">In the C-terminal section; belongs to the glycosyl hydrolase 73 family.</text>
</comment>
<proteinExistence type="inferred from homology"/>
<gene>
    <name type="primary">atl</name>
    <name type="synonym">nag</name>
    <name type="ordered locus">SAS0988</name>
</gene>
<evidence type="ECO:0000250" key="1"/>
<evidence type="ECO:0000255" key="2"/>
<evidence type="ECO:0000255" key="3">
    <source>
        <dbReference type="PROSITE-ProRule" id="PRU01116"/>
    </source>
</evidence>
<evidence type="ECO:0000256" key="4">
    <source>
        <dbReference type="SAM" id="MobiDB-lite"/>
    </source>
</evidence>
<evidence type="ECO:0000305" key="5"/>
<feature type="signal peptide" evidence="2">
    <location>
        <begin position="1"/>
        <end position="29"/>
    </location>
</feature>
<feature type="chain" id="PRO_0000045477" description="Bifunctional autolysin">
    <location>
        <begin position="30"/>
        <end position="1250"/>
    </location>
</feature>
<feature type="domain" description="GW 1" evidence="3">
    <location>
        <begin position="437"/>
        <end position="511"/>
    </location>
</feature>
<feature type="domain" description="GW 2" evidence="3">
    <location>
        <begin position="513"/>
        <end position="587"/>
    </location>
</feature>
<feature type="domain" description="GW 3" evidence="3">
    <location>
        <begin position="606"/>
        <end position="680"/>
    </location>
</feature>
<feature type="domain" description="GW 4" evidence="3">
    <location>
        <begin position="682"/>
        <end position="756"/>
    </location>
</feature>
<feature type="domain" description="GW 5" evidence="3">
    <location>
        <begin position="778"/>
        <end position="853"/>
    </location>
</feature>
<feature type="domain" description="GW 6" evidence="3">
    <location>
        <begin position="855"/>
        <end position="930"/>
    </location>
</feature>
<feature type="domain" description="GW 7" evidence="3">
    <location>
        <begin position="937"/>
        <end position="1011"/>
    </location>
</feature>
<feature type="region of interest" description="Disordered" evidence="4">
    <location>
        <begin position="103"/>
        <end position="151"/>
    </location>
</feature>
<feature type="region of interest" description="Disordered" evidence="4">
    <location>
        <begin position="173"/>
        <end position="219"/>
    </location>
</feature>
<feature type="region of interest" description="N-acetylmuramoyl-L-alanine amidase">
    <location>
        <begin position="199"/>
        <end position="769"/>
    </location>
</feature>
<feature type="region of interest" description="Endo-beta-N-acetylglucosaminidase">
    <location>
        <begin position="770"/>
        <end position="1250"/>
    </location>
</feature>
<feature type="compositionally biased region" description="Polar residues" evidence="4">
    <location>
        <begin position="103"/>
        <end position="138"/>
    </location>
</feature>
<feature type="compositionally biased region" description="Low complexity" evidence="4">
    <location>
        <begin position="173"/>
        <end position="196"/>
    </location>
</feature>
<protein>
    <recommendedName>
        <fullName>Bifunctional autolysin</fullName>
    </recommendedName>
    <domain>
        <recommendedName>
            <fullName>N-acetylmuramoyl-L-alanine amidase</fullName>
            <ecNumber>3.5.1.28</ecNumber>
        </recommendedName>
    </domain>
    <domain>
        <recommendedName>
            <fullName>Mannosyl-glycoprotein endo-beta-N-acetylglucosaminidase</fullName>
            <ecNumber>3.2.1.96</ecNumber>
        </recommendedName>
    </domain>
</protein>
<organism>
    <name type="scientific">Staphylococcus aureus (strain MSSA476)</name>
    <dbReference type="NCBI Taxonomy" id="282459"/>
    <lineage>
        <taxon>Bacteria</taxon>
        <taxon>Bacillati</taxon>
        <taxon>Bacillota</taxon>
        <taxon>Bacilli</taxon>
        <taxon>Bacillales</taxon>
        <taxon>Staphylococcaceae</taxon>
        <taxon>Staphylococcus</taxon>
    </lineage>
</organism>